<proteinExistence type="inferred from homology"/>
<organism>
    <name type="scientific">Edwardsiella ictaluri (strain 93-146)</name>
    <dbReference type="NCBI Taxonomy" id="634503"/>
    <lineage>
        <taxon>Bacteria</taxon>
        <taxon>Pseudomonadati</taxon>
        <taxon>Pseudomonadota</taxon>
        <taxon>Gammaproteobacteria</taxon>
        <taxon>Enterobacterales</taxon>
        <taxon>Hafniaceae</taxon>
        <taxon>Edwardsiella</taxon>
    </lineage>
</organism>
<sequence length="114" mass="10608">MRNTLIAVTTVSLLAFSTASLAGPSRTTKGALLGATAGLLSGNGVNGVLKGAALGAGVGAISEKGRKGKKARKGATIGATVGAVAGVLSGNGIEGAIKGAVVGGAGGAIIGRIQ</sequence>
<accession>C5BD73</accession>
<protein>
    <recommendedName>
        <fullName evidence="1">UPF0757 protein YmgG</fullName>
    </recommendedName>
</protein>
<evidence type="ECO:0000255" key="1">
    <source>
        <dbReference type="HAMAP-Rule" id="MF_01455"/>
    </source>
</evidence>
<feature type="chain" id="PRO_0000388945" description="UPF0757 protein YmgG">
    <location>
        <begin position="1"/>
        <end position="114"/>
    </location>
</feature>
<name>YMGG_EDWI9</name>
<reference key="1">
    <citation type="submission" date="2009-03" db="EMBL/GenBank/DDBJ databases">
        <title>Complete genome sequence of Edwardsiella ictaluri 93-146.</title>
        <authorList>
            <person name="Williams M.L."/>
            <person name="Gillaspy A.F."/>
            <person name="Dyer D.W."/>
            <person name="Thune R.L."/>
            <person name="Waldbieser G.C."/>
            <person name="Schuster S.C."/>
            <person name="Gipson J."/>
            <person name="Zaitshik J."/>
            <person name="Landry C."/>
            <person name="Lawrence M.L."/>
        </authorList>
    </citation>
    <scope>NUCLEOTIDE SEQUENCE [LARGE SCALE GENOMIC DNA]</scope>
    <source>
        <strain>93-146</strain>
    </source>
</reference>
<dbReference type="EMBL" id="CP001600">
    <property type="protein sequence ID" value="ACR68568.1"/>
    <property type="molecule type" value="Genomic_DNA"/>
</dbReference>
<dbReference type="RefSeq" id="WP_015870733.1">
    <property type="nucleotide sequence ID" value="NZ_CP169062.1"/>
</dbReference>
<dbReference type="STRING" id="67780.B6E78_00240"/>
<dbReference type="KEGG" id="eic:NT01EI_1378"/>
<dbReference type="PATRIC" id="fig|634503.3.peg.1239"/>
<dbReference type="HOGENOM" id="CLU_164687_0_0_6"/>
<dbReference type="Proteomes" id="UP000001485">
    <property type="component" value="Chromosome"/>
</dbReference>
<dbReference type="HAMAP" id="MF_01455">
    <property type="entry name" value="UPF0757"/>
    <property type="match status" value="1"/>
</dbReference>
<dbReference type="InterPro" id="IPR025693">
    <property type="entry name" value="Gly-zipper_OmpA-like_dom"/>
</dbReference>
<dbReference type="InterPro" id="IPR022833">
    <property type="entry name" value="UPF0757_YmgG"/>
</dbReference>
<dbReference type="Pfam" id="PF13436">
    <property type="entry name" value="Gly-zipper_OmpA"/>
    <property type="match status" value="2"/>
</dbReference>
<comment type="similarity">
    <text evidence="1">Belongs to the UPF0757 family.</text>
</comment>
<gene>
    <name evidence="1" type="primary">ymgG</name>
    <name type="ordered locus">NT01EI_1378</name>
</gene>